<comment type="catalytic activity">
    <reaction evidence="1">
        <text>DNA(n) + a 2'-deoxyribonucleoside 5'-triphosphate = DNA(n+1) + diphosphate</text>
        <dbReference type="Rhea" id="RHEA:22508"/>
        <dbReference type="Rhea" id="RHEA-COMP:17339"/>
        <dbReference type="Rhea" id="RHEA-COMP:17340"/>
        <dbReference type="ChEBI" id="CHEBI:33019"/>
        <dbReference type="ChEBI" id="CHEBI:61560"/>
        <dbReference type="ChEBI" id="CHEBI:173112"/>
        <dbReference type="EC" id="2.7.7.49"/>
    </reaction>
</comment>
<proteinExistence type="predicted"/>
<sequence length="1003" mass="114635">MITHRLVGKFFKPLGNDSDITFFVLPNLHSFDGIIGDDTLKDLKAIVDRKNNCLIITPGIKIPLLARASINVNPLLAAEHPDGTQEILNSLLGEFPRIFEPPLSGMSVETAVKAEIRTNTQDPIYAKSYPYPVNMRGEVERQIDELLQDGIIRPSNSPYNSPIWIVPKKPKPNGEKQYRMVVDFKRLNTVTIPDTYPIPDINATLASLGNAKYFTTLDLTSGFHQIHMKESDIPKTAFSTLNGKYEFLRLPFGLKNAPAIFQRMIDDILREHIGKVCYVYIDDIIVFSEDYDTHWKNLRLVLASLSKANLQVNLEKSHFLDTQVEFLGYIVTADGIKADPKKVRAISEMPPPTSVKELKRFLGMTSYYRKFIQDYAKVAKPLTNLTRGLYANIKSSQSSKVPITLDETALQSFNDLKSILCSSEILAFPCFTKPFHLTTDASNWAIGAVLSQDDQGRDRPIAYISRSLNKTEENYATIEKEMLAIIWSLDNLRAYLYGAGTIKVYTDHQPLTFALGNRNFNAKLKRWKARIEEYNCELIYKPGKSNVVADALSRIPPQLNQLSTDLDANPEDDMQSLATAHSALHDSSRLIPHVESPINVFKNQLIFDTTRSKYLCEHPFPGYTRHLIPLKDGSLADLTNSLQSCLRPVIINGVKIPEAHLQRFQSICLANFLLYKIRITQRLVADVSGAEEICEIIEKEHRRAHRGPTEIRLQLLEKYYFPRMSSTIRLQTSSCQCCKLYKYERHPNKPNLQPTPIPNYPCEILHIDIFALEKRLYLSCIDKFSKFAKLFHLQSKASVHLRETLVEALHYFTAPKVLVSDNERGLLCPTVLNYLRSLDIDLYYAPTQKSEVNGQVERFHSTFLEIYRCLKDELPTFKPVELVHIAVDRYNTSVHSVTNRKPADVFFDRSSRVNYQGLTDFRRQTLEDIKGLIEYKQIRGNMARNKNRDEPKSYGPGDEVFVANKQIKTKEKARFRCEKVQEDNKITVKTRSGKIFHKSDLRN</sequence>
<dbReference type="EC" id="3.4.23.-"/>
<dbReference type="EC" id="2.7.7.49"/>
<dbReference type="EMBL" id="AY180918">
    <property type="protein sequence ID" value="AAN87271.1"/>
    <property type="molecule type" value="Genomic_DNA"/>
</dbReference>
<dbReference type="SMR" id="Q8I7P9"/>
<dbReference type="FlyBase" id="FBgn0025875">
    <property type="gene designation" value="opus\pol"/>
</dbReference>
<dbReference type="PRO" id="PR:Q8I7P9"/>
<dbReference type="GO" id="GO:0042575">
    <property type="term" value="C:DNA polymerase complex"/>
    <property type="evidence" value="ECO:0007669"/>
    <property type="project" value="UniProtKB-ARBA"/>
</dbReference>
<dbReference type="GO" id="GO:0005634">
    <property type="term" value="C:nucleus"/>
    <property type="evidence" value="ECO:0000303"/>
    <property type="project" value="UniProtKB"/>
</dbReference>
<dbReference type="GO" id="GO:0004519">
    <property type="term" value="F:endonuclease activity"/>
    <property type="evidence" value="ECO:0007669"/>
    <property type="project" value="UniProtKB-KW"/>
</dbReference>
<dbReference type="GO" id="GO:0003676">
    <property type="term" value="F:nucleic acid binding"/>
    <property type="evidence" value="ECO:0007669"/>
    <property type="project" value="InterPro"/>
</dbReference>
<dbReference type="GO" id="GO:0008233">
    <property type="term" value="F:peptidase activity"/>
    <property type="evidence" value="ECO:0007669"/>
    <property type="project" value="UniProtKB-KW"/>
</dbReference>
<dbReference type="GO" id="GO:0003964">
    <property type="term" value="F:RNA-directed DNA polymerase activity"/>
    <property type="evidence" value="ECO:0000303"/>
    <property type="project" value="UniProtKB"/>
</dbReference>
<dbReference type="GO" id="GO:0015074">
    <property type="term" value="P:DNA integration"/>
    <property type="evidence" value="ECO:0007669"/>
    <property type="project" value="InterPro"/>
</dbReference>
<dbReference type="GO" id="GO:0006313">
    <property type="term" value="P:DNA transposition"/>
    <property type="evidence" value="ECO:0000303"/>
    <property type="project" value="UniProtKB"/>
</dbReference>
<dbReference type="GO" id="GO:0006508">
    <property type="term" value="P:proteolysis"/>
    <property type="evidence" value="ECO:0007669"/>
    <property type="project" value="UniProtKB-KW"/>
</dbReference>
<dbReference type="CDD" id="cd09274">
    <property type="entry name" value="RNase_HI_RT_Ty3"/>
    <property type="match status" value="1"/>
</dbReference>
<dbReference type="CDD" id="cd01647">
    <property type="entry name" value="RT_LTR"/>
    <property type="match status" value="1"/>
</dbReference>
<dbReference type="FunFam" id="3.10.10.10:FF:000007">
    <property type="entry name" value="Retrovirus-related Pol polyprotein from transposon 17.6-like Protein"/>
    <property type="match status" value="1"/>
</dbReference>
<dbReference type="FunFam" id="3.30.70.270:FF:000020">
    <property type="entry name" value="Transposon Tf2-6 polyprotein-like Protein"/>
    <property type="match status" value="1"/>
</dbReference>
<dbReference type="Gene3D" id="3.30.70.270">
    <property type="match status" value="2"/>
</dbReference>
<dbReference type="Gene3D" id="3.10.10.10">
    <property type="entry name" value="HIV Type 1 Reverse Transcriptase, subunit A, domain 1"/>
    <property type="match status" value="1"/>
</dbReference>
<dbReference type="Gene3D" id="3.30.420.10">
    <property type="entry name" value="Ribonuclease H-like superfamily/Ribonuclease H"/>
    <property type="match status" value="1"/>
</dbReference>
<dbReference type="InterPro" id="IPR043502">
    <property type="entry name" value="DNA/RNA_pol_sf"/>
</dbReference>
<dbReference type="InterPro" id="IPR001584">
    <property type="entry name" value="Integrase_cat-core"/>
</dbReference>
<dbReference type="InterPro" id="IPR041588">
    <property type="entry name" value="Integrase_H2C2"/>
</dbReference>
<dbReference type="InterPro" id="IPR050951">
    <property type="entry name" value="Retrovirus_Pol_polyprotein"/>
</dbReference>
<dbReference type="InterPro" id="IPR043128">
    <property type="entry name" value="Rev_trsase/Diguanyl_cyclase"/>
</dbReference>
<dbReference type="InterPro" id="IPR012337">
    <property type="entry name" value="RNaseH-like_sf"/>
</dbReference>
<dbReference type="InterPro" id="IPR036397">
    <property type="entry name" value="RNaseH_sf"/>
</dbReference>
<dbReference type="InterPro" id="IPR000477">
    <property type="entry name" value="RT_dom"/>
</dbReference>
<dbReference type="InterPro" id="IPR041373">
    <property type="entry name" value="RT_RNaseH"/>
</dbReference>
<dbReference type="PANTHER" id="PTHR37984">
    <property type="entry name" value="PROTEIN CBG26694"/>
    <property type="match status" value="1"/>
</dbReference>
<dbReference type="PANTHER" id="PTHR37984:SF5">
    <property type="entry name" value="PROTEIN NYNRIN-LIKE"/>
    <property type="match status" value="1"/>
</dbReference>
<dbReference type="Pfam" id="PF17921">
    <property type="entry name" value="Integrase_H2C2"/>
    <property type="match status" value="1"/>
</dbReference>
<dbReference type="Pfam" id="PF17917">
    <property type="entry name" value="RT_RNaseH"/>
    <property type="match status" value="1"/>
</dbReference>
<dbReference type="Pfam" id="PF00078">
    <property type="entry name" value="RVT_1"/>
    <property type="match status" value="1"/>
</dbReference>
<dbReference type="SUPFAM" id="SSF56672">
    <property type="entry name" value="DNA/RNA polymerases"/>
    <property type="match status" value="1"/>
</dbReference>
<dbReference type="SUPFAM" id="SSF53098">
    <property type="entry name" value="Ribonuclease H-like"/>
    <property type="match status" value="1"/>
</dbReference>
<dbReference type="PROSITE" id="PS50994">
    <property type="entry name" value="INTEGRASE"/>
    <property type="match status" value="1"/>
</dbReference>
<dbReference type="PROSITE" id="PS50878">
    <property type="entry name" value="RT_POL"/>
    <property type="match status" value="1"/>
</dbReference>
<organism evidence="5">
    <name type="scientific">Drosophila melanogaster</name>
    <name type="common">Fruit fly</name>
    <dbReference type="NCBI Taxonomy" id="7227"/>
    <lineage>
        <taxon>Eukaryota</taxon>
        <taxon>Metazoa</taxon>
        <taxon>Ecdysozoa</taxon>
        <taxon>Arthropoda</taxon>
        <taxon>Hexapoda</taxon>
        <taxon>Insecta</taxon>
        <taxon>Pterygota</taxon>
        <taxon>Neoptera</taxon>
        <taxon>Endopterygota</taxon>
        <taxon>Diptera</taxon>
        <taxon>Brachycera</taxon>
        <taxon>Muscomorpha</taxon>
        <taxon>Ephydroidea</taxon>
        <taxon>Drosophilidae</taxon>
        <taxon>Drosophila</taxon>
        <taxon>Sophophora</taxon>
    </lineage>
</organism>
<protein>
    <recommendedName>
        <fullName>Retrovirus-related Pol polyprotein from transposon opus</fullName>
    </recommendedName>
    <domain>
        <recommendedName>
            <fullName>Protease</fullName>
            <ecNumber>3.4.23.-</ecNumber>
        </recommendedName>
    </domain>
    <domain>
        <recommendedName>
            <fullName>Reverse transcriptase</fullName>
            <ecNumber>2.7.7.49</ecNumber>
        </recommendedName>
    </domain>
    <domain>
        <recommendedName>
            <fullName>Endonuclease</fullName>
        </recommendedName>
    </domain>
</protein>
<evidence type="ECO:0000255" key="1">
    <source>
        <dbReference type="PROSITE-ProRule" id="PRU00405"/>
    </source>
</evidence>
<evidence type="ECO:0000255" key="2">
    <source>
        <dbReference type="PROSITE-ProRule" id="PRU00457"/>
    </source>
</evidence>
<evidence type="ECO:0000269" key="3">
    <source>
    </source>
</evidence>
<evidence type="ECO:0000305" key="4"/>
<evidence type="ECO:0000312" key="5">
    <source>
        <dbReference type="EMBL" id="AAN87271.1"/>
    </source>
</evidence>
<accession>Q8I7P9</accession>
<feature type="chain" id="PRO_0000199559" description="Retrovirus-related Pol polyprotein from transposon opus">
    <location>
        <begin position="1"/>
        <end position="1003"/>
    </location>
</feature>
<feature type="domain" description="Reverse transcriptase" evidence="1">
    <location>
        <begin position="147"/>
        <end position="331"/>
    </location>
</feature>
<feature type="domain" description="Integrase catalytic" evidence="2">
    <location>
        <begin position="752"/>
        <end position="910"/>
    </location>
</feature>
<keyword id="KW-0255">Endonuclease</keyword>
<keyword id="KW-0378">Hydrolase</keyword>
<keyword id="KW-0540">Nuclease</keyword>
<keyword id="KW-0548">Nucleotidyltransferase</keyword>
<keyword id="KW-0645">Protease</keyword>
<keyword id="KW-0695">RNA-directed DNA polymerase</keyword>
<keyword id="KW-0808">Transferase</keyword>
<keyword id="KW-0814">Transposable element</keyword>
<gene>
    <name type="primary">pol</name>
</gene>
<name>POL5_DROME</name>
<reference evidence="4" key="1">
    <citation type="journal article" date="2002" name="Genome Biol.">
        <title>The transposable elements of the Drosophila melanogaster euchromatin: a genomics perspective.</title>
        <authorList>
            <person name="Kaminker J.S."/>
            <person name="Bergman C.M."/>
            <person name="Kronmiller B."/>
            <person name="Carlson J.W."/>
            <person name="Svirskas R."/>
            <person name="Patel S."/>
            <person name="Frise E."/>
            <person name="Wheeler D.A."/>
            <person name="Lewis S.E."/>
            <person name="Rubin G.M."/>
            <person name="Ashburner M."/>
            <person name="Celniker S.E."/>
        </authorList>
    </citation>
    <scope>NUCLEOTIDE SEQUENCE [GENOMIC DNA]</scope>
    <source>
        <strain evidence="3">Berkeley</strain>
    </source>
</reference>